<evidence type="ECO:0000255" key="1">
    <source>
        <dbReference type="HAMAP-Rule" id="MF_00767"/>
    </source>
</evidence>
<dbReference type="EC" id="3.5.1.96" evidence="1"/>
<dbReference type="EMBL" id="CP000857">
    <property type="protein sequence ID" value="ACN46535.1"/>
    <property type="molecule type" value="Genomic_DNA"/>
</dbReference>
<dbReference type="RefSeq" id="WP_000368451.1">
    <property type="nucleotide sequence ID" value="NC_012125.1"/>
</dbReference>
<dbReference type="SMR" id="C0Q6X7"/>
<dbReference type="KEGG" id="sei:SPC_2424"/>
<dbReference type="HOGENOM" id="CLU_071608_0_0_6"/>
<dbReference type="UniPathway" id="UPA00185">
    <property type="reaction ID" value="UER00283"/>
</dbReference>
<dbReference type="Proteomes" id="UP000001599">
    <property type="component" value="Chromosome"/>
</dbReference>
<dbReference type="GO" id="GO:0016788">
    <property type="term" value="F:hydrolase activity, acting on ester bonds"/>
    <property type="evidence" value="ECO:0007669"/>
    <property type="project" value="UniProtKB-UniRule"/>
</dbReference>
<dbReference type="GO" id="GO:0009017">
    <property type="term" value="F:succinylglutamate desuccinylase activity"/>
    <property type="evidence" value="ECO:0007669"/>
    <property type="project" value="UniProtKB-EC"/>
</dbReference>
<dbReference type="GO" id="GO:0008270">
    <property type="term" value="F:zinc ion binding"/>
    <property type="evidence" value="ECO:0007669"/>
    <property type="project" value="UniProtKB-UniRule"/>
</dbReference>
<dbReference type="GO" id="GO:0019544">
    <property type="term" value="P:arginine catabolic process to glutamate"/>
    <property type="evidence" value="ECO:0007669"/>
    <property type="project" value="UniProtKB-UniRule"/>
</dbReference>
<dbReference type="GO" id="GO:0019545">
    <property type="term" value="P:arginine catabolic process to succinate"/>
    <property type="evidence" value="ECO:0007669"/>
    <property type="project" value="UniProtKB-UniRule"/>
</dbReference>
<dbReference type="CDD" id="cd03855">
    <property type="entry name" value="M14_ASTE"/>
    <property type="match status" value="1"/>
</dbReference>
<dbReference type="FunFam" id="3.40.630.10:FF:000017">
    <property type="entry name" value="Succinylglutamate desuccinylase"/>
    <property type="match status" value="1"/>
</dbReference>
<dbReference type="Gene3D" id="3.40.630.10">
    <property type="entry name" value="Zn peptidases"/>
    <property type="match status" value="1"/>
</dbReference>
<dbReference type="HAMAP" id="MF_00767">
    <property type="entry name" value="Arg_catab_AstE"/>
    <property type="match status" value="1"/>
</dbReference>
<dbReference type="InterPro" id="IPR050178">
    <property type="entry name" value="AspA/AstE_fam"/>
</dbReference>
<dbReference type="InterPro" id="IPR055438">
    <property type="entry name" value="AstE_AspA_cat"/>
</dbReference>
<dbReference type="InterPro" id="IPR007036">
    <property type="entry name" value="Aste_AspA_hybrid_dom"/>
</dbReference>
<dbReference type="InterPro" id="IPR016681">
    <property type="entry name" value="SuccinylGlu_desuccinylase"/>
</dbReference>
<dbReference type="NCBIfam" id="TIGR03242">
    <property type="entry name" value="arg_catab_astE"/>
    <property type="match status" value="1"/>
</dbReference>
<dbReference type="NCBIfam" id="NF003706">
    <property type="entry name" value="PRK05324.1"/>
    <property type="match status" value="1"/>
</dbReference>
<dbReference type="PANTHER" id="PTHR15162">
    <property type="entry name" value="ASPARTOACYLASE"/>
    <property type="match status" value="1"/>
</dbReference>
<dbReference type="PANTHER" id="PTHR15162:SF7">
    <property type="entry name" value="SUCCINYLGLUTAMATE DESUCCINYLASE"/>
    <property type="match status" value="1"/>
</dbReference>
<dbReference type="Pfam" id="PF24827">
    <property type="entry name" value="AstE_AspA_cat"/>
    <property type="match status" value="1"/>
</dbReference>
<dbReference type="Pfam" id="PF04952">
    <property type="entry name" value="AstE_AspA_hybrid"/>
    <property type="match status" value="1"/>
</dbReference>
<dbReference type="PIRSF" id="PIRSF017020">
    <property type="entry name" value="AstE"/>
    <property type="match status" value="1"/>
</dbReference>
<dbReference type="SUPFAM" id="SSF53187">
    <property type="entry name" value="Zn-dependent exopeptidases"/>
    <property type="match status" value="1"/>
</dbReference>
<sequence>MDNFLALTLSGTTPRVTQGKGAGFRWRWLGHGLLELTPDAPVDRALILSAGIHGNETAPVEMLDKLLSALYSGSLTLTWRVLVVLGNPQALAAGIRYCHSDMNRMFGGRWQSFAESDETRRARELELSLDTFFSSGQARVRWHLDLHTAIRGSHHLRFGVLPQRDRPWEADFLAWLGAAGLEALVFHQAPGGTFTHFSSEHFGALSCTLELGKALPFGQNDLTQFSVTSQALSALLSGIETSTSSSPPLRYRVVSQITRHSDKFALYMDAQTLNFTAFAKGTLLAEEGDKRVTVTHDVEYVLFPNPSVACGLRAGLMLERLP</sequence>
<proteinExistence type="inferred from homology"/>
<protein>
    <recommendedName>
        <fullName evidence="1">Succinylglutamate desuccinylase</fullName>
        <ecNumber evidence="1">3.5.1.96</ecNumber>
    </recommendedName>
</protein>
<accession>C0Q6X7</accession>
<name>ASTE_SALPC</name>
<comment type="function">
    <text evidence="1">Transforms N(2)-succinylglutamate into succinate and glutamate.</text>
</comment>
<comment type="catalytic activity">
    <reaction evidence="1">
        <text>N-succinyl-L-glutamate + H2O = L-glutamate + succinate</text>
        <dbReference type="Rhea" id="RHEA:15169"/>
        <dbReference type="ChEBI" id="CHEBI:15377"/>
        <dbReference type="ChEBI" id="CHEBI:29985"/>
        <dbReference type="ChEBI" id="CHEBI:30031"/>
        <dbReference type="ChEBI" id="CHEBI:58763"/>
        <dbReference type="EC" id="3.5.1.96"/>
    </reaction>
</comment>
<comment type="cofactor">
    <cofactor evidence="1">
        <name>Zn(2+)</name>
        <dbReference type="ChEBI" id="CHEBI:29105"/>
    </cofactor>
    <text evidence="1">Binds 1 zinc ion per subunit.</text>
</comment>
<comment type="pathway">
    <text evidence="1">Amino-acid degradation; L-arginine degradation via AST pathway; L-glutamate and succinate from L-arginine: step 5/5.</text>
</comment>
<comment type="similarity">
    <text evidence="1">Belongs to the AspA/AstE family. Succinylglutamate desuccinylase subfamily.</text>
</comment>
<keyword id="KW-0056">Arginine metabolism</keyword>
<keyword id="KW-0378">Hydrolase</keyword>
<keyword id="KW-0479">Metal-binding</keyword>
<keyword id="KW-0862">Zinc</keyword>
<organism>
    <name type="scientific">Salmonella paratyphi C (strain RKS4594)</name>
    <dbReference type="NCBI Taxonomy" id="476213"/>
    <lineage>
        <taxon>Bacteria</taxon>
        <taxon>Pseudomonadati</taxon>
        <taxon>Pseudomonadota</taxon>
        <taxon>Gammaproteobacteria</taxon>
        <taxon>Enterobacterales</taxon>
        <taxon>Enterobacteriaceae</taxon>
        <taxon>Salmonella</taxon>
    </lineage>
</organism>
<gene>
    <name evidence="1" type="primary">astE</name>
    <name type="ordered locus">SPC_2424</name>
</gene>
<reference key="1">
    <citation type="journal article" date="2009" name="PLoS ONE">
        <title>Salmonella paratyphi C: genetic divergence from Salmonella choleraesuis and pathogenic convergence with Salmonella typhi.</title>
        <authorList>
            <person name="Liu W.-Q."/>
            <person name="Feng Y."/>
            <person name="Wang Y."/>
            <person name="Zou Q.-H."/>
            <person name="Chen F."/>
            <person name="Guo J.-T."/>
            <person name="Peng Y.-H."/>
            <person name="Jin Y."/>
            <person name="Li Y.-G."/>
            <person name="Hu S.-N."/>
            <person name="Johnston R.N."/>
            <person name="Liu G.-R."/>
            <person name="Liu S.-L."/>
        </authorList>
    </citation>
    <scope>NUCLEOTIDE SEQUENCE [LARGE SCALE GENOMIC DNA]</scope>
    <source>
        <strain>RKS4594</strain>
    </source>
</reference>
<feature type="chain" id="PRO_1000148441" description="Succinylglutamate desuccinylase">
    <location>
        <begin position="1"/>
        <end position="322"/>
    </location>
</feature>
<feature type="active site" evidence="1">
    <location>
        <position position="210"/>
    </location>
</feature>
<feature type="binding site" evidence="1">
    <location>
        <position position="53"/>
    </location>
    <ligand>
        <name>Zn(2+)</name>
        <dbReference type="ChEBI" id="CHEBI:29105"/>
    </ligand>
</feature>
<feature type="binding site" evidence="1">
    <location>
        <position position="56"/>
    </location>
    <ligand>
        <name>Zn(2+)</name>
        <dbReference type="ChEBI" id="CHEBI:29105"/>
    </ligand>
</feature>
<feature type="binding site" evidence="1">
    <location>
        <position position="147"/>
    </location>
    <ligand>
        <name>Zn(2+)</name>
        <dbReference type="ChEBI" id="CHEBI:29105"/>
    </ligand>
</feature>